<sequence>MSKVCILTGKRPTYGNNVSHANNRTRKRFEPNLHTKRIWVEEEKRWVKVRVSAKAMKIMSKTGTAELAKLIR</sequence>
<reference key="1">
    <citation type="submission" date="2008-06" db="EMBL/GenBank/DDBJ databases">
        <title>Complete sequence of Chlorobium phaeobacteroides BS1.</title>
        <authorList>
            <consortium name="US DOE Joint Genome Institute"/>
            <person name="Lucas S."/>
            <person name="Copeland A."/>
            <person name="Lapidus A."/>
            <person name="Glavina del Rio T."/>
            <person name="Dalin E."/>
            <person name="Tice H."/>
            <person name="Bruce D."/>
            <person name="Goodwin L."/>
            <person name="Pitluck S."/>
            <person name="Schmutz J."/>
            <person name="Larimer F."/>
            <person name="Land M."/>
            <person name="Hauser L."/>
            <person name="Kyrpides N."/>
            <person name="Ovchinnikova G."/>
            <person name="Li T."/>
            <person name="Liu Z."/>
            <person name="Zhao F."/>
            <person name="Overmann J."/>
            <person name="Bryant D.A."/>
            <person name="Richardson P."/>
        </authorList>
    </citation>
    <scope>NUCLEOTIDE SEQUENCE [LARGE SCALE GENOMIC DNA]</scope>
    <source>
        <strain>BS1</strain>
    </source>
</reference>
<evidence type="ECO:0000255" key="1">
    <source>
        <dbReference type="HAMAP-Rule" id="MF_00373"/>
    </source>
</evidence>
<evidence type="ECO:0000305" key="2"/>
<comment type="similarity">
    <text evidence="1">Belongs to the bacterial ribosomal protein bL28 family.</text>
</comment>
<dbReference type="EMBL" id="CP001101">
    <property type="protein sequence ID" value="ACE03560.1"/>
    <property type="molecule type" value="Genomic_DNA"/>
</dbReference>
<dbReference type="SMR" id="B3EMT2"/>
<dbReference type="STRING" id="331678.Cphamn1_0601"/>
<dbReference type="KEGG" id="cpb:Cphamn1_0601"/>
<dbReference type="eggNOG" id="COG0227">
    <property type="taxonomic scope" value="Bacteria"/>
</dbReference>
<dbReference type="HOGENOM" id="CLU_064548_3_1_10"/>
<dbReference type="OrthoDB" id="9805609at2"/>
<dbReference type="GO" id="GO:1990904">
    <property type="term" value="C:ribonucleoprotein complex"/>
    <property type="evidence" value="ECO:0007669"/>
    <property type="project" value="UniProtKB-KW"/>
</dbReference>
<dbReference type="GO" id="GO:0005840">
    <property type="term" value="C:ribosome"/>
    <property type="evidence" value="ECO:0007669"/>
    <property type="project" value="UniProtKB-KW"/>
</dbReference>
<dbReference type="GO" id="GO:0003735">
    <property type="term" value="F:structural constituent of ribosome"/>
    <property type="evidence" value="ECO:0007669"/>
    <property type="project" value="InterPro"/>
</dbReference>
<dbReference type="GO" id="GO:0006412">
    <property type="term" value="P:translation"/>
    <property type="evidence" value="ECO:0007669"/>
    <property type="project" value="UniProtKB-UniRule"/>
</dbReference>
<dbReference type="FunFam" id="2.30.170.40:FF:000001">
    <property type="entry name" value="50S ribosomal protein L28"/>
    <property type="match status" value="1"/>
</dbReference>
<dbReference type="Gene3D" id="2.30.170.40">
    <property type="entry name" value="Ribosomal protein L28/L24"/>
    <property type="match status" value="1"/>
</dbReference>
<dbReference type="HAMAP" id="MF_00373">
    <property type="entry name" value="Ribosomal_bL28"/>
    <property type="match status" value="1"/>
</dbReference>
<dbReference type="InterPro" id="IPR026569">
    <property type="entry name" value="Ribosomal_bL28"/>
</dbReference>
<dbReference type="InterPro" id="IPR034704">
    <property type="entry name" value="Ribosomal_bL28/bL31-like_sf"/>
</dbReference>
<dbReference type="InterPro" id="IPR001383">
    <property type="entry name" value="Ribosomal_bL28_bact-type"/>
</dbReference>
<dbReference type="InterPro" id="IPR037147">
    <property type="entry name" value="Ribosomal_bL28_sf"/>
</dbReference>
<dbReference type="NCBIfam" id="TIGR00009">
    <property type="entry name" value="L28"/>
    <property type="match status" value="1"/>
</dbReference>
<dbReference type="PANTHER" id="PTHR13528">
    <property type="entry name" value="39S RIBOSOMAL PROTEIN L28, MITOCHONDRIAL"/>
    <property type="match status" value="1"/>
</dbReference>
<dbReference type="PANTHER" id="PTHR13528:SF2">
    <property type="entry name" value="LARGE RIBOSOMAL SUBUNIT PROTEIN BL28M"/>
    <property type="match status" value="1"/>
</dbReference>
<dbReference type="Pfam" id="PF00830">
    <property type="entry name" value="Ribosomal_L28"/>
    <property type="match status" value="1"/>
</dbReference>
<dbReference type="SUPFAM" id="SSF143800">
    <property type="entry name" value="L28p-like"/>
    <property type="match status" value="1"/>
</dbReference>
<keyword id="KW-0687">Ribonucleoprotein</keyword>
<keyword id="KW-0689">Ribosomal protein</keyword>
<name>RL28_CHLPB</name>
<accession>B3EMT2</accession>
<gene>
    <name evidence="1" type="primary">rpmB</name>
    <name type="ordered locus">Cphamn1_0601</name>
</gene>
<protein>
    <recommendedName>
        <fullName evidence="1">Large ribosomal subunit protein bL28</fullName>
    </recommendedName>
    <alternativeName>
        <fullName evidence="2">50S ribosomal protein L28</fullName>
    </alternativeName>
</protein>
<organism>
    <name type="scientific">Chlorobium phaeobacteroides (strain BS1)</name>
    <dbReference type="NCBI Taxonomy" id="331678"/>
    <lineage>
        <taxon>Bacteria</taxon>
        <taxon>Pseudomonadati</taxon>
        <taxon>Chlorobiota</taxon>
        <taxon>Chlorobiia</taxon>
        <taxon>Chlorobiales</taxon>
        <taxon>Chlorobiaceae</taxon>
        <taxon>Chlorobium/Pelodictyon group</taxon>
        <taxon>Chlorobium</taxon>
    </lineage>
</organism>
<proteinExistence type="inferred from homology"/>
<feature type="chain" id="PRO_1000121603" description="Large ribosomal subunit protein bL28">
    <location>
        <begin position="1"/>
        <end position="72"/>
    </location>
</feature>